<evidence type="ECO:0000255" key="1">
    <source>
        <dbReference type="HAMAP-Rule" id="MF_01367"/>
    </source>
</evidence>
<evidence type="ECO:0000305" key="2"/>
<organism>
    <name type="scientific">Stutzerimonas stutzeri (strain A1501)</name>
    <name type="common">Pseudomonas stutzeri</name>
    <dbReference type="NCBI Taxonomy" id="379731"/>
    <lineage>
        <taxon>Bacteria</taxon>
        <taxon>Pseudomonadati</taxon>
        <taxon>Pseudomonadota</taxon>
        <taxon>Gammaproteobacteria</taxon>
        <taxon>Pseudomonadales</taxon>
        <taxon>Pseudomonadaceae</taxon>
        <taxon>Stutzerimonas</taxon>
    </lineage>
</organism>
<feature type="chain" id="PRO_1000055680" description="Large ribosomal subunit protein uL14">
    <location>
        <begin position="1"/>
        <end position="122"/>
    </location>
</feature>
<keyword id="KW-1185">Reference proteome</keyword>
<keyword id="KW-0687">Ribonucleoprotein</keyword>
<keyword id="KW-0689">Ribosomal protein</keyword>
<keyword id="KW-0694">RNA-binding</keyword>
<keyword id="KW-0699">rRNA-binding</keyword>
<protein>
    <recommendedName>
        <fullName evidence="1">Large ribosomal subunit protein uL14</fullName>
    </recommendedName>
    <alternativeName>
        <fullName evidence="2">50S ribosomal protein L14</fullName>
    </alternativeName>
</protein>
<comment type="function">
    <text evidence="1">Binds to 23S rRNA. Forms part of two intersubunit bridges in the 70S ribosome.</text>
</comment>
<comment type="subunit">
    <text evidence="1">Part of the 50S ribosomal subunit. Forms a cluster with proteins L3 and L19. In the 70S ribosome, L14 and L19 interact and together make contacts with the 16S rRNA in bridges B5 and B8.</text>
</comment>
<comment type="similarity">
    <text evidence="1">Belongs to the universal ribosomal protein uL14 family.</text>
</comment>
<name>RL14_STUS1</name>
<sequence>MIQTQSMLDVADNSGARRVMCIKVLGGSHRRYAGIGDIIKVTVKEAIPRGKVKKGQVMTAVVVRTRHGVRRPDGSIIRFDGNAAVLLNNKQEPIGTRIFGPVTRELRTEKFMKIVSLAPEVL</sequence>
<gene>
    <name evidence="1" type="primary">rplN</name>
    <name type="ordered locus">PST_0794</name>
</gene>
<dbReference type="EMBL" id="CP000304">
    <property type="protein sequence ID" value="ABP78491.1"/>
    <property type="molecule type" value="Genomic_DNA"/>
</dbReference>
<dbReference type="RefSeq" id="WP_003281831.1">
    <property type="nucleotide sequence ID" value="NC_009434.1"/>
</dbReference>
<dbReference type="SMR" id="A4VHP0"/>
<dbReference type="GeneID" id="75213395"/>
<dbReference type="KEGG" id="psa:PST_0794"/>
<dbReference type="eggNOG" id="COG0093">
    <property type="taxonomic scope" value="Bacteria"/>
</dbReference>
<dbReference type="HOGENOM" id="CLU_095071_2_1_6"/>
<dbReference type="Proteomes" id="UP000000233">
    <property type="component" value="Chromosome"/>
</dbReference>
<dbReference type="GO" id="GO:0022625">
    <property type="term" value="C:cytosolic large ribosomal subunit"/>
    <property type="evidence" value="ECO:0007669"/>
    <property type="project" value="TreeGrafter"/>
</dbReference>
<dbReference type="GO" id="GO:0070180">
    <property type="term" value="F:large ribosomal subunit rRNA binding"/>
    <property type="evidence" value="ECO:0007669"/>
    <property type="project" value="TreeGrafter"/>
</dbReference>
<dbReference type="GO" id="GO:0003735">
    <property type="term" value="F:structural constituent of ribosome"/>
    <property type="evidence" value="ECO:0007669"/>
    <property type="project" value="InterPro"/>
</dbReference>
<dbReference type="GO" id="GO:0006412">
    <property type="term" value="P:translation"/>
    <property type="evidence" value="ECO:0007669"/>
    <property type="project" value="UniProtKB-UniRule"/>
</dbReference>
<dbReference type="CDD" id="cd00337">
    <property type="entry name" value="Ribosomal_uL14"/>
    <property type="match status" value="1"/>
</dbReference>
<dbReference type="FunFam" id="2.40.150.20:FF:000001">
    <property type="entry name" value="50S ribosomal protein L14"/>
    <property type="match status" value="1"/>
</dbReference>
<dbReference type="Gene3D" id="2.40.150.20">
    <property type="entry name" value="Ribosomal protein L14"/>
    <property type="match status" value="1"/>
</dbReference>
<dbReference type="HAMAP" id="MF_01367">
    <property type="entry name" value="Ribosomal_uL14"/>
    <property type="match status" value="1"/>
</dbReference>
<dbReference type="InterPro" id="IPR000218">
    <property type="entry name" value="Ribosomal_uL14"/>
</dbReference>
<dbReference type="InterPro" id="IPR005745">
    <property type="entry name" value="Ribosomal_uL14_bac-type"/>
</dbReference>
<dbReference type="InterPro" id="IPR019972">
    <property type="entry name" value="Ribosomal_uL14_CS"/>
</dbReference>
<dbReference type="InterPro" id="IPR036853">
    <property type="entry name" value="Ribosomal_uL14_sf"/>
</dbReference>
<dbReference type="NCBIfam" id="TIGR01067">
    <property type="entry name" value="rplN_bact"/>
    <property type="match status" value="1"/>
</dbReference>
<dbReference type="PANTHER" id="PTHR11761">
    <property type="entry name" value="50S/60S RIBOSOMAL PROTEIN L14/L23"/>
    <property type="match status" value="1"/>
</dbReference>
<dbReference type="PANTHER" id="PTHR11761:SF3">
    <property type="entry name" value="LARGE RIBOSOMAL SUBUNIT PROTEIN UL14M"/>
    <property type="match status" value="1"/>
</dbReference>
<dbReference type="Pfam" id="PF00238">
    <property type="entry name" value="Ribosomal_L14"/>
    <property type="match status" value="1"/>
</dbReference>
<dbReference type="SMART" id="SM01374">
    <property type="entry name" value="Ribosomal_L14"/>
    <property type="match status" value="1"/>
</dbReference>
<dbReference type="SUPFAM" id="SSF50193">
    <property type="entry name" value="Ribosomal protein L14"/>
    <property type="match status" value="1"/>
</dbReference>
<dbReference type="PROSITE" id="PS00049">
    <property type="entry name" value="RIBOSOMAL_L14"/>
    <property type="match status" value="1"/>
</dbReference>
<reference key="1">
    <citation type="journal article" date="2008" name="Proc. Natl. Acad. Sci. U.S.A.">
        <title>Nitrogen fixation island and rhizosphere competence traits in the genome of root-associated Pseudomonas stutzeri A1501.</title>
        <authorList>
            <person name="Yan Y."/>
            <person name="Yang J."/>
            <person name="Dou Y."/>
            <person name="Chen M."/>
            <person name="Ping S."/>
            <person name="Peng J."/>
            <person name="Lu W."/>
            <person name="Zhang W."/>
            <person name="Yao Z."/>
            <person name="Li H."/>
            <person name="Liu W."/>
            <person name="He S."/>
            <person name="Geng L."/>
            <person name="Zhang X."/>
            <person name="Yang F."/>
            <person name="Yu H."/>
            <person name="Zhan Y."/>
            <person name="Li D."/>
            <person name="Lin Z."/>
            <person name="Wang Y."/>
            <person name="Elmerich C."/>
            <person name="Lin M."/>
            <person name="Jin Q."/>
        </authorList>
    </citation>
    <scope>NUCLEOTIDE SEQUENCE [LARGE SCALE GENOMIC DNA]</scope>
    <source>
        <strain>A1501</strain>
    </source>
</reference>
<accession>A4VHP0</accession>
<proteinExistence type="inferred from homology"/>